<feature type="chain" id="PRO_1000002429" description="Holliday junction branch migration complex subunit RuvA">
    <location>
        <begin position="1"/>
        <end position="214"/>
    </location>
</feature>
<feature type="region of interest" description="Domain I" evidence="1">
    <location>
        <begin position="1"/>
        <end position="63"/>
    </location>
</feature>
<feature type="region of interest" description="Domain II" evidence="1">
    <location>
        <begin position="64"/>
        <end position="139"/>
    </location>
</feature>
<feature type="region of interest" description="Flexible linker" evidence="1">
    <location>
        <begin position="139"/>
        <end position="143"/>
    </location>
</feature>
<feature type="region of interest" description="Domain III" evidence="1">
    <location>
        <begin position="144"/>
        <end position="214"/>
    </location>
</feature>
<comment type="function">
    <text evidence="1">The RuvA-RuvB-RuvC complex processes Holliday junction (HJ) DNA during genetic recombination and DNA repair, while the RuvA-RuvB complex plays an important role in the rescue of blocked DNA replication forks via replication fork reversal (RFR). RuvA specifically binds to HJ cruciform DNA, conferring on it an open structure. The RuvB hexamer acts as an ATP-dependent pump, pulling dsDNA into and through the RuvAB complex. HJ branch migration allows RuvC to scan DNA until it finds its consensus sequence, where it cleaves and resolves the cruciform DNA.</text>
</comment>
<comment type="subunit">
    <text evidence="1">Homotetramer. Forms an RuvA(8)-RuvB(12)-Holliday junction (HJ) complex. HJ DNA is sandwiched between 2 RuvA tetramers; dsDNA enters through RuvA and exits via RuvB. An RuvB hexamer assembles on each DNA strand where it exits the tetramer. Each RuvB hexamer is contacted by two RuvA subunits (via domain III) on 2 adjacent RuvB subunits; this complex drives branch migration. In the full resolvosome a probable DNA-RuvA(4)-RuvB(12)-RuvC(2) complex forms which resolves the HJ.</text>
</comment>
<comment type="subcellular location">
    <subcellularLocation>
        <location evidence="1">Cytoplasm</location>
    </subcellularLocation>
</comment>
<comment type="domain">
    <text evidence="1">Has three domains with a flexible linker between the domains II and III and assumes an 'L' shape. Domain III is highly mobile and contacts RuvB.</text>
</comment>
<comment type="similarity">
    <text evidence="1">Belongs to the RuvA family.</text>
</comment>
<keyword id="KW-0963">Cytoplasm</keyword>
<keyword id="KW-0227">DNA damage</keyword>
<keyword id="KW-0233">DNA recombination</keyword>
<keyword id="KW-0234">DNA repair</keyword>
<keyword id="KW-0238">DNA-binding</keyword>
<gene>
    <name evidence="1" type="primary">ruvA</name>
    <name type="ordered locus">CMM_1815</name>
</gene>
<dbReference type="EMBL" id="AM711867">
    <property type="protein sequence ID" value="CAN01870.1"/>
    <property type="molecule type" value="Genomic_DNA"/>
</dbReference>
<dbReference type="RefSeq" id="WP_012038502.1">
    <property type="nucleotide sequence ID" value="NC_009480.1"/>
</dbReference>
<dbReference type="SMR" id="A5CS07"/>
<dbReference type="GeneID" id="92947802"/>
<dbReference type="KEGG" id="cmi:CMM_1815"/>
<dbReference type="eggNOG" id="COG0632">
    <property type="taxonomic scope" value="Bacteria"/>
</dbReference>
<dbReference type="HOGENOM" id="CLU_087936_2_1_11"/>
<dbReference type="OrthoDB" id="5293449at2"/>
<dbReference type="Proteomes" id="UP000001564">
    <property type="component" value="Chromosome"/>
</dbReference>
<dbReference type="GO" id="GO:0005737">
    <property type="term" value="C:cytoplasm"/>
    <property type="evidence" value="ECO:0007669"/>
    <property type="project" value="UniProtKB-SubCell"/>
</dbReference>
<dbReference type="GO" id="GO:0009379">
    <property type="term" value="C:Holliday junction helicase complex"/>
    <property type="evidence" value="ECO:0007669"/>
    <property type="project" value="InterPro"/>
</dbReference>
<dbReference type="GO" id="GO:0048476">
    <property type="term" value="C:Holliday junction resolvase complex"/>
    <property type="evidence" value="ECO:0007669"/>
    <property type="project" value="UniProtKB-UniRule"/>
</dbReference>
<dbReference type="GO" id="GO:0005524">
    <property type="term" value="F:ATP binding"/>
    <property type="evidence" value="ECO:0007669"/>
    <property type="project" value="InterPro"/>
</dbReference>
<dbReference type="GO" id="GO:0000400">
    <property type="term" value="F:four-way junction DNA binding"/>
    <property type="evidence" value="ECO:0007669"/>
    <property type="project" value="UniProtKB-UniRule"/>
</dbReference>
<dbReference type="GO" id="GO:0009378">
    <property type="term" value="F:four-way junction helicase activity"/>
    <property type="evidence" value="ECO:0007669"/>
    <property type="project" value="InterPro"/>
</dbReference>
<dbReference type="GO" id="GO:0006310">
    <property type="term" value="P:DNA recombination"/>
    <property type="evidence" value="ECO:0007669"/>
    <property type="project" value="UniProtKB-UniRule"/>
</dbReference>
<dbReference type="GO" id="GO:0006281">
    <property type="term" value="P:DNA repair"/>
    <property type="evidence" value="ECO:0007669"/>
    <property type="project" value="UniProtKB-UniRule"/>
</dbReference>
<dbReference type="Gene3D" id="1.10.150.20">
    <property type="entry name" value="5' to 3' exonuclease, C-terminal subdomain"/>
    <property type="match status" value="1"/>
</dbReference>
<dbReference type="Gene3D" id="1.10.8.10">
    <property type="entry name" value="DNA helicase RuvA subunit, C-terminal domain"/>
    <property type="match status" value="1"/>
</dbReference>
<dbReference type="Gene3D" id="2.40.50.140">
    <property type="entry name" value="Nucleic acid-binding proteins"/>
    <property type="match status" value="1"/>
</dbReference>
<dbReference type="HAMAP" id="MF_00031">
    <property type="entry name" value="DNA_HJ_migration_RuvA"/>
    <property type="match status" value="1"/>
</dbReference>
<dbReference type="InterPro" id="IPR013849">
    <property type="entry name" value="DNA_helicase_Holl-junc_RuvA_I"/>
</dbReference>
<dbReference type="InterPro" id="IPR003583">
    <property type="entry name" value="Hlx-hairpin-Hlx_DNA-bd_motif"/>
</dbReference>
<dbReference type="InterPro" id="IPR012340">
    <property type="entry name" value="NA-bd_OB-fold"/>
</dbReference>
<dbReference type="InterPro" id="IPR000085">
    <property type="entry name" value="RuvA"/>
</dbReference>
<dbReference type="InterPro" id="IPR010994">
    <property type="entry name" value="RuvA_2-like"/>
</dbReference>
<dbReference type="InterPro" id="IPR011114">
    <property type="entry name" value="RuvA_C"/>
</dbReference>
<dbReference type="InterPro" id="IPR036267">
    <property type="entry name" value="RuvA_C_sf"/>
</dbReference>
<dbReference type="NCBIfam" id="TIGR00084">
    <property type="entry name" value="ruvA"/>
    <property type="match status" value="1"/>
</dbReference>
<dbReference type="Pfam" id="PF14520">
    <property type="entry name" value="HHH_5"/>
    <property type="match status" value="1"/>
</dbReference>
<dbReference type="Pfam" id="PF07499">
    <property type="entry name" value="RuvA_C"/>
    <property type="match status" value="1"/>
</dbReference>
<dbReference type="Pfam" id="PF01330">
    <property type="entry name" value="RuvA_N"/>
    <property type="match status" value="1"/>
</dbReference>
<dbReference type="SMART" id="SM00278">
    <property type="entry name" value="HhH1"/>
    <property type="match status" value="2"/>
</dbReference>
<dbReference type="SUPFAM" id="SSF46929">
    <property type="entry name" value="DNA helicase RuvA subunit, C-terminal domain"/>
    <property type="match status" value="1"/>
</dbReference>
<dbReference type="SUPFAM" id="SSF50249">
    <property type="entry name" value="Nucleic acid-binding proteins"/>
    <property type="match status" value="1"/>
</dbReference>
<dbReference type="SUPFAM" id="SSF47781">
    <property type="entry name" value="RuvA domain 2-like"/>
    <property type="match status" value="1"/>
</dbReference>
<proteinExistence type="inferred from homology"/>
<protein>
    <recommendedName>
        <fullName evidence="1">Holliday junction branch migration complex subunit RuvA</fullName>
    </recommendedName>
</protein>
<accession>A5CS07</accession>
<evidence type="ECO:0000255" key="1">
    <source>
        <dbReference type="HAMAP-Rule" id="MF_00031"/>
    </source>
</evidence>
<name>RUVA_CLAM3</name>
<organism>
    <name type="scientific">Clavibacter michiganensis subsp. michiganensis (strain NCPPB 382)</name>
    <dbReference type="NCBI Taxonomy" id="443906"/>
    <lineage>
        <taxon>Bacteria</taxon>
        <taxon>Bacillati</taxon>
        <taxon>Actinomycetota</taxon>
        <taxon>Actinomycetes</taxon>
        <taxon>Micrococcales</taxon>
        <taxon>Microbacteriaceae</taxon>
        <taxon>Clavibacter</taxon>
    </lineage>
</organism>
<reference key="1">
    <citation type="journal article" date="2008" name="J. Bacteriol.">
        <title>The genome sequence of the tomato-pathogenic actinomycete Clavibacter michiganensis subsp. michiganensis NCPPB382 reveals a large island involved in pathogenicity.</title>
        <authorList>
            <person name="Gartemann K.-H."/>
            <person name="Abt B."/>
            <person name="Bekel T."/>
            <person name="Burger A."/>
            <person name="Engemann J."/>
            <person name="Fluegel M."/>
            <person name="Gaigalat L."/>
            <person name="Goesmann A."/>
            <person name="Graefen I."/>
            <person name="Kalinowski J."/>
            <person name="Kaup O."/>
            <person name="Kirchner O."/>
            <person name="Krause L."/>
            <person name="Linke B."/>
            <person name="McHardy A."/>
            <person name="Meyer F."/>
            <person name="Pohle S."/>
            <person name="Rueckert C."/>
            <person name="Schneiker S."/>
            <person name="Zellermann E.-M."/>
            <person name="Puehler A."/>
            <person name="Eichenlaub R."/>
            <person name="Kaiser O."/>
            <person name="Bartels D."/>
        </authorList>
    </citation>
    <scope>NUCLEOTIDE SEQUENCE [LARGE SCALE GENOMIC DNA]</scope>
    <source>
        <strain>NCPPB 382</strain>
    </source>
</reference>
<sequence length="214" mass="21927">MISSLRGTVLSVSGQTLLLEVHGVGYGVSVTPRHALELRNGSEATVLTSLVVREDSLTLFGFPGPDELRAFELLCGVTGVGPKSALAVLEHLDPEAMAQAVAAEDDAAFRRVSGIGPKTAKLIVLQLAGKLFVTQPRARSATSAASTVTADVVTALIGLGWSERVARTAVDDAAAAAADQGLPADMPRLLRVALGMLGPQQPAGAAPTGQAADR</sequence>